<gene>
    <name type="primary">Sec11c</name>
    <name type="synonym">Sec11l3</name>
    <name type="synonym">Spc21</name>
</gene>
<organism>
    <name type="scientific">Mus musculus</name>
    <name type="common">Mouse</name>
    <dbReference type="NCBI Taxonomy" id="10090"/>
    <lineage>
        <taxon>Eukaryota</taxon>
        <taxon>Metazoa</taxon>
        <taxon>Chordata</taxon>
        <taxon>Craniata</taxon>
        <taxon>Vertebrata</taxon>
        <taxon>Euteleostomi</taxon>
        <taxon>Mammalia</taxon>
        <taxon>Eutheria</taxon>
        <taxon>Euarchontoglires</taxon>
        <taxon>Glires</taxon>
        <taxon>Rodentia</taxon>
        <taxon>Myomorpha</taxon>
        <taxon>Muroidea</taxon>
        <taxon>Muridae</taxon>
        <taxon>Murinae</taxon>
        <taxon>Mus</taxon>
        <taxon>Mus</taxon>
    </lineage>
</organism>
<dbReference type="EC" id="3.4.21.89" evidence="2"/>
<dbReference type="EMBL" id="AK007641">
    <property type="protein sequence ID" value="BAB25156.1"/>
    <property type="molecule type" value="mRNA"/>
</dbReference>
<dbReference type="EMBL" id="BC037187">
    <property type="protein sequence ID" value="AAH37187.1"/>
    <property type="molecule type" value="mRNA"/>
</dbReference>
<dbReference type="CCDS" id="CCDS29309.1"/>
<dbReference type="RefSeq" id="NP_079744.1">
    <property type="nucleotide sequence ID" value="NM_025468.2"/>
</dbReference>
<dbReference type="SMR" id="Q9D8V7"/>
<dbReference type="BioGRID" id="211357">
    <property type="interactions" value="2"/>
</dbReference>
<dbReference type="FunCoup" id="Q9D8V7">
    <property type="interactions" value="406"/>
</dbReference>
<dbReference type="IntAct" id="Q9D8V7">
    <property type="interactions" value="1"/>
</dbReference>
<dbReference type="STRING" id="10090.ENSMUSP00000025394"/>
<dbReference type="MEROPS" id="S26.010"/>
<dbReference type="PhosphoSitePlus" id="Q9D8V7"/>
<dbReference type="PaxDb" id="10090-ENSMUSP00000025394"/>
<dbReference type="PeptideAtlas" id="Q9D8V7"/>
<dbReference type="ProteomicsDB" id="253401"/>
<dbReference type="Pumba" id="Q9D8V7"/>
<dbReference type="Antibodypedia" id="22969">
    <property type="antibodies" value="48 antibodies from 14 providers"/>
</dbReference>
<dbReference type="DNASU" id="66286"/>
<dbReference type="Ensembl" id="ENSMUST00000025394.14">
    <property type="protein sequence ID" value="ENSMUSP00000025394.7"/>
    <property type="gene ID" value="ENSMUSG00000024516.14"/>
</dbReference>
<dbReference type="GeneID" id="66286"/>
<dbReference type="KEGG" id="mmu:66286"/>
<dbReference type="UCSC" id="uc008ffh.1">
    <property type="organism name" value="mouse"/>
</dbReference>
<dbReference type="AGR" id="MGI:1913536"/>
<dbReference type="CTD" id="90701"/>
<dbReference type="MGI" id="MGI:1913536">
    <property type="gene designation" value="Sec11c"/>
</dbReference>
<dbReference type="VEuPathDB" id="HostDB:ENSMUSG00000024516"/>
<dbReference type="eggNOG" id="KOG3342">
    <property type="taxonomic scope" value="Eukaryota"/>
</dbReference>
<dbReference type="GeneTree" id="ENSGT00390000015600"/>
<dbReference type="HOGENOM" id="CLU_089996_0_0_1"/>
<dbReference type="InParanoid" id="Q9D8V7"/>
<dbReference type="OMA" id="GSMEPFM"/>
<dbReference type="OrthoDB" id="8505at9989"/>
<dbReference type="PhylomeDB" id="Q9D8V7"/>
<dbReference type="TreeFam" id="TF313648"/>
<dbReference type="Reactome" id="R-MMU-422085">
    <property type="pathway name" value="Synthesis, secretion, and deacylation of Ghrelin"/>
</dbReference>
<dbReference type="BioGRID-ORCS" id="66286">
    <property type="hits" value="2 hits in 77 CRISPR screens"/>
</dbReference>
<dbReference type="ChiTaRS" id="Sec11c">
    <property type="organism name" value="mouse"/>
</dbReference>
<dbReference type="PRO" id="PR:Q9D8V7"/>
<dbReference type="Proteomes" id="UP000000589">
    <property type="component" value="Chromosome 18"/>
</dbReference>
<dbReference type="RNAct" id="Q9D8V7">
    <property type="molecule type" value="protein"/>
</dbReference>
<dbReference type="Bgee" id="ENSMUSG00000024516">
    <property type="expression patterns" value="Expressed in lacrimal gland and 255 other cell types or tissues"/>
</dbReference>
<dbReference type="ExpressionAtlas" id="Q9D8V7">
    <property type="expression patterns" value="baseline and differential"/>
</dbReference>
<dbReference type="GO" id="GO:0005787">
    <property type="term" value="C:signal peptidase complex"/>
    <property type="evidence" value="ECO:0000250"/>
    <property type="project" value="UniProtKB"/>
</dbReference>
<dbReference type="GO" id="GO:0004252">
    <property type="term" value="F:serine-type endopeptidase activity"/>
    <property type="evidence" value="ECO:0000250"/>
    <property type="project" value="UniProtKB"/>
</dbReference>
<dbReference type="GO" id="GO:0006465">
    <property type="term" value="P:signal peptide processing"/>
    <property type="evidence" value="ECO:0000250"/>
    <property type="project" value="UniProtKB"/>
</dbReference>
<dbReference type="CDD" id="cd06530">
    <property type="entry name" value="S26_SPase_I"/>
    <property type="match status" value="1"/>
</dbReference>
<dbReference type="FunFam" id="2.10.109.10:FF:000003">
    <property type="entry name" value="Signal peptidase complex catalytic subunit SEC11"/>
    <property type="match status" value="1"/>
</dbReference>
<dbReference type="Gene3D" id="2.10.109.10">
    <property type="entry name" value="Umud Fragment, subunit A"/>
    <property type="match status" value="1"/>
</dbReference>
<dbReference type="InterPro" id="IPR036286">
    <property type="entry name" value="LexA/Signal_pep-like_sf"/>
</dbReference>
<dbReference type="InterPro" id="IPR019758">
    <property type="entry name" value="Pept_S26A_signal_pept_1_CS"/>
</dbReference>
<dbReference type="InterPro" id="IPR019756">
    <property type="entry name" value="Pept_S26A_signal_pept_1_Ser-AS"/>
</dbReference>
<dbReference type="InterPro" id="IPR015927">
    <property type="entry name" value="Peptidase_S24_S26A/B/C"/>
</dbReference>
<dbReference type="InterPro" id="IPR019533">
    <property type="entry name" value="Peptidase_S26"/>
</dbReference>
<dbReference type="InterPro" id="IPR001733">
    <property type="entry name" value="Peptidase_S26B"/>
</dbReference>
<dbReference type="NCBIfam" id="TIGR02228">
    <property type="entry name" value="sigpep_I_arch"/>
    <property type="match status" value="1"/>
</dbReference>
<dbReference type="PANTHER" id="PTHR10806">
    <property type="entry name" value="SIGNAL PEPTIDASE COMPLEX CATALYTIC SUBUNIT SEC11"/>
    <property type="match status" value="1"/>
</dbReference>
<dbReference type="PANTHER" id="PTHR10806:SF12">
    <property type="entry name" value="SIGNAL PEPTIDASE COMPLEX CATALYTIC SUBUNIT SEC11C"/>
    <property type="match status" value="1"/>
</dbReference>
<dbReference type="Pfam" id="PF00717">
    <property type="entry name" value="Peptidase_S24"/>
    <property type="match status" value="1"/>
</dbReference>
<dbReference type="PRINTS" id="PR00728">
    <property type="entry name" value="SIGNALPTASE"/>
</dbReference>
<dbReference type="SUPFAM" id="SSF51306">
    <property type="entry name" value="LexA/Signal peptidase"/>
    <property type="match status" value="1"/>
</dbReference>
<dbReference type="PROSITE" id="PS00501">
    <property type="entry name" value="SPASE_I_1"/>
    <property type="match status" value="1"/>
</dbReference>
<dbReference type="PROSITE" id="PS00761">
    <property type="entry name" value="SPASE_I_3"/>
    <property type="match status" value="1"/>
</dbReference>
<accession>Q9D8V7</accession>
<protein>
    <recommendedName>
        <fullName>Signal peptidase complex catalytic subunit SEC11C</fullName>
        <ecNumber evidence="2">3.4.21.89</ecNumber>
    </recommendedName>
    <alternativeName>
        <fullName>Microsomal signal peptidase 21 kDa subunit</fullName>
        <shortName>SPase 21 kDa subunit</shortName>
    </alternativeName>
    <alternativeName>
        <fullName>SEC11 homolog C</fullName>
    </alternativeName>
    <alternativeName>
        <fullName>SEC11-like protein 3</fullName>
    </alternativeName>
    <alternativeName>
        <fullName>SPC21</fullName>
    </alternativeName>
</protein>
<feature type="chain" id="PRO_0000109549" description="Signal peptidase complex catalytic subunit SEC11C">
    <location>
        <begin position="1"/>
        <end position="192"/>
    </location>
</feature>
<feature type="topological domain" description="Cytoplasmic" evidence="1">
    <location>
        <begin position="1"/>
        <end position="28"/>
    </location>
</feature>
<feature type="transmembrane region" description="Helical; Signal-anchor for type II membrane protein" evidence="3">
    <location>
        <begin position="29"/>
        <end position="48"/>
    </location>
</feature>
<feature type="topological domain" description="Lumenal" evidence="1">
    <location>
        <begin position="49"/>
        <end position="192"/>
    </location>
</feature>
<feature type="region of interest" description="C-terminal short (CTS) helix" evidence="2">
    <location>
        <begin position="177"/>
        <end position="188"/>
    </location>
</feature>
<feature type="active site" description="Charge relay system" evidence="2">
    <location>
        <position position="68"/>
    </location>
</feature>
<feature type="active site" description="Charge relay system" evidence="2">
    <location>
        <position position="108"/>
    </location>
</feature>
<feature type="active site" description="Charge relay system" evidence="2">
    <location>
        <position position="134"/>
    </location>
</feature>
<proteinExistence type="evidence at protein level"/>
<name>SC11C_MOUSE</name>
<reference key="1">
    <citation type="journal article" date="2005" name="Science">
        <title>The transcriptional landscape of the mammalian genome.</title>
        <authorList>
            <person name="Carninci P."/>
            <person name="Kasukawa T."/>
            <person name="Katayama S."/>
            <person name="Gough J."/>
            <person name="Frith M.C."/>
            <person name="Maeda N."/>
            <person name="Oyama R."/>
            <person name="Ravasi T."/>
            <person name="Lenhard B."/>
            <person name="Wells C."/>
            <person name="Kodzius R."/>
            <person name="Shimokawa K."/>
            <person name="Bajic V.B."/>
            <person name="Brenner S.E."/>
            <person name="Batalov S."/>
            <person name="Forrest A.R."/>
            <person name="Zavolan M."/>
            <person name="Davis M.J."/>
            <person name="Wilming L.G."/>
            <person name="Aidinis V."/>
            <person name="Allen J.E."/>
            <person name="Ambesi-Impiombato A."/>
            <person name="Apweiler R."/>
            <person name="Aturaliya R.N."/>
            <person name="Bailey T.L."/>
            <person name="Bansal M."/>
            <person name="Baxter L."/>
            <person name="Beisel K.W."/>
            <person name="Bersano T."/>
            <person name="Bono H."/>
            <person name="Chalk A.M."/>
            <person name="Chiu K.P."/>
            <person name="Choudhary V."/>
            <person name="Christoffels A."/>
            <person name="Clutterbuck D.R."/>
            <person name="Crowe M.L."/>
            <person name="Dalla E."/>
            <person name="Dalrymple B.P."/>
            <person name="de Bono B."/>
            <person name="Della Gatta G."/>
            <person name="di Bernardo D."/>
            <person name="Down T."/>
            <person name="Engstrom P."/>
            <person name="Fagiolini M."/>
            <person name="Faulkner G."/>
            <person name="Fletcher C.F."/>
            <person name="Fukushima T."/>
            <person name="Furuno M."/>
            <person name="Futaki S."/>
            <person name="Gariboldi M."/>
            <person name="Georgii-Hemming P."/>
            <person name="Gingeras T.R."/>
            <person name="Gojobori T."/>
            <person name="Green R.E."/>
            <person name="Gustincich S."/>
            <person name="Harbers M."/>
            <person name="Hayashi Y."/>
            <person name="Hensch T.K."/>
            <person name="Hirokawa N."/>
            <person name="Hill D."/>
            <person name="Huminiecki L."/>
            <person name="Iacono M."/>
            <person name="Ikeo K."/>
            <person name="Iwama A."/>
            <person name="Ishikawa T."/>
            <person name="Jakt M."/>
            <person name="Kanapin A."/>
            <person name="Katoh M."/>
            <person name="Kawasawa Y."/>
            <person name="Kelso J."/>
            <person name="Kitamura H."/>
            <person name="Kitano H."/>
            <person name="Kollias G."/>
            <person name="Krishnan S.P."/>
            <person name="Kruger A."/>
            <person name="Kummerfeld S.K."/>
            <person name="Kurochkin I.V."/>
            <person name="Lareau L.F."/>
            <person name="Lazarevic D."/>
            <person name="Lipovich L."/>
            <person name="Liu J."/>
            <person name="Liuni S."/>
            <person name="McWilliam S."/>
            <person name="Madan Babu M."/>
            <person name="Madera M."/>
            <person name="Marchionni L."/>
            <person name="Matsuda H."/>
            <person name="Matsuzawa S."/>
            <person name="Miki H."/>
            <person name="Mignone F."/>
            <person name="Miyake S."/>
            <person name="Morris K."/>
            <person name="Mottagui-Tabar S."/>
            <person name="Mulder N."/>
            <person name="Nakano N."/>
            <person name="Nakauchi H."/>
            <person name="Ng P."/>
            <person name="Nilsson R."/>
            <person name="Nishiguchi S."/>
            <person name="Nishikawa S."/>
            <person name="Nori F."/>
            <person name="Ohara O."/>
            <person name="Okazaki Y."/>
            <person name="Orlando V."/>
            <person name="Pang K.C."/>
            <person name="Pavan W.J."/>
            <person name="Pavesi G."/>
            <person name="Pesole G."/>
            <person name="Petrovsky N."/>
            <person name="Piazza S."/>
            <person name="Reed J."/>
            <person name="Reid J.F."/>
            <person name="Ring B.Z."/>
            <person name="Ringwald M."/>
            <person name="Rost B."/>
            <person name="Ruan Y."/>
            <person name="Salzberg S.L."/>
            <person name="Sandelin A."/>
            <person name="Schneider C."/>
            <person name="Schoenbach C."/>
            <person name="Sekiguchi K."/>
            <person name="Semple C.A."/>
            <person name="Seno S."/>
            <person name="Sessa L."/>
            <person name="Sheng Y."/>
            <person name="Shibata Y."/>
            <person name="Shimada H."/>
            <person name="Shimada K."/>
            <person name="Silva D."/>
            <person name="Sinclair B."/>
            <person name="Sperling S."/>
            <person name="Stupka E."/>
            <person name="Sugiura K."/>
            <person name="Sultana R."/>
            <person name="Takenaka Y."/>
            <person name="Taki K."/>
            <person name="Tammoja K."/>
            <person name="Tan S.L."/>
            <person name="Tang S."/>
            <person name="Taylor M.S."/>
            <person name="Tegner J."/>
            <person name="Teichmann S.A."/>
            <person name="Ueda H.R."/>
            <person name="van Nimwegen E."/>
            <person name="Verardo R."/>
            <person name="Wei C.L."/>
            <person name="Yagi K."/>
            <person name="Yamanishi H."/>
            <person name="Zabarovsky E."/>
            <person name="Zhu S."/>
            <person name="Zimmer A."/>
            <person name="Hide W."/>
            <person name="Bult C."/>
            <person name="Grimmond S.M."/>
            <person name="Teasdale R.D."/>
            <person name="Liu E.T."/>
            <person name="Brusic V."/>
            <person name="Quackenbush J."/>
            <person name="Wahlestedt C."/>
            <person name="Mattick J.S."/>
            <person name="Hume D.A."/>
            <person name="Kai C."/>
            <person name="Sasaki D."/>
            <person name="Tomaru Y."/>
            <person name="Fukuda S."/>
            <person name="Kanamori-Katayama M."/>
            <person name="Suzuki M."/>
            <person name="Aoki J."/>
            <person name="Arakawa T."/>
            <person name="Iida J."/>
            <person name="Imamura K."/>
            <person name="Itoh M."/>
            <person name="Kato T."/>
            <person name="Kawaji H."/>
            <person name="Kawagashira N."/>
            <person name="Kawashima T."/>
            <person name="Kojima M."/>
            <person name="Kondo S."/>
            <person name="Konno H."/>
            <person name="Nakano K."/>
            <person name="Ninomiya N."/>
            <person name="Nishio T."/>
            <person name="Okada M."/>
            <person name="Plessy C."/>
            <person name="Shibata K."/>
            <person name="Shiraki T."/>
            <person name="Suzuki S."/>
            <person name="Tagami M."/>
            <person name="Waki K."/>
            <person name="Watahiki A."/>
            <person name="Okamura-Oho Y."/>
            <person name="Suzuki H."/>
            <person name="Kawai J."/>
            <person name="Hayashizaki Y."/>
        </authorList>
    </citation>
    <scope>NUCLEOTIDE SEQUENCE [LARGE SCALE MRNA]</scope>
    <source>
        <strain>C57BL/6J</strain>
        <tissue>Pancreas</tissue>
    </source>
</reference>
<reference key="2">
    <citation type="journal article" date="2004" name="Genome Res.">
        <title>The status, quality, and expansion of the NIH full-length cDNA project: the Mammalian Gene Collection (MGC).</title>
        <authorList>
            <consortium name="The MGC Project Team"/>
        </authorList>
    </citation>
    <scope>NUCLEOTIDE SEQUENCE [LARGE SCALE MRNA]</scope>
    <source>
        <strain>C57BL/6J</strain>
        <tissue>Mammary gland</tissue>
    </source>
</reference>
<reference key="3">
    <citation type="journal article" date="2010" name="Cell">
        <title>A tissue-specific atlas of mouse protein phosphorylation and expression.</title>
        <authorList>
            <person name="Huttlin E.L."/>
            <person name="Jedrychowski M.P."/>
            <person name="Elias J.E."/>
            <person name="Goswami T."/>
            <person name="Rad R."/>
            <person name="Beausoleil S.A."/>
            <person name="Villen J."/>
            <person name="Haas W."/>
            <person name="Sowa M.E."/>
            <person name="Gygi S.P."/>
        </authorList>
    </citation>
    <scope>IDENTIFICATION BY MASS SPECTROMETRY [LARGE SCALE ANALYSIS]</scope>
    <source>
        <tissue>Kidney</tissue>
        <tissue>Liver</tissue>
        <tissue>Lung</tissue>
        <tissue>Pancreas</tissue>
        <tissue>Spleen</tissue>
        <tissue>Testis</tissue>
    </source>
</reference>
<evidence type="ECO:0000250" key="1">
    <source>
        <dbReference type="UniProtKB" id="P13679"/>
    </source>
</evidence>
<evidence type="ECO:0000250" key="2">
    <source>
        <dbReference type="UniProtKB" id="Q9BY50"/>
    </source>
</evidence>
<evidence type="ECO:0000255" key="3"/>
<evidence type="ECO:0000305" key="4"/>
<sequence>MVRAGAVGTHLPTSSLDIFGDLRKMNKRQLYYQVLNFAMIVSSALMIWKGLIVLTGSESPIVVVLSGSMEPAFHRGDLLFLTNFREDPIRAGEIVVFKVEGRDIPIVHRVIKVHEKDNGDIKFLTKGDNNEVDDRGLYKEGQNWLEKKDVVGRARGFLPYVGMVTIIMNDYPKFKYALLAVMGAYVLLKRES</sequence>
<keyword id="KW-0256">Endoplasmic reticulum</keyword>
<keyword id="KW-0378">Hydrolase</keyword>
<keyword id="KW-0472">Membrane</keyword>
<keyword id="KW-0645">Protease</keyword>
<keyword id="KW-1185">Reference proteome</keyword>
<keyword id="KW-0735">Signal-anchor</keyword>
<keyword id="KW-0812">Transmembrane</keyword>
<keyword id="KW-1133">Transmembrane helix</keyword>
<comment type="function">
    <text evidence="2">Catalytic component of the signal peptidase complex (SPC) which catalyzes the cleavage of N-terminal signal sequences from nascent proteins as they are translocated into the lumen of the endoplasmic reticulum. Specifically cleaves N-terminal signal peptides that contain a hydrophobic alpha-helix (h-region) shorter than 18-20 amino acids.</text>
</comment>
<comment type="catalytic activity">
    <reaction evidence="2">
        <text>Cleavage of hydrophobic, N-terminal signal or leader sequences from secreted and periplasmic proteins.</text>
        <dbReference type="EC" id="3.4.21.89"/>
    </reaction>
</comment>
<comment type="subunit">
    <text evidence="2">Component of the signal peptidase complex paralog C (SPC-C) composed of a catalytic subunit SEC11C and three accessory subunits SPCS1, SPCS2 and SPCS3. Within the complex, interacts with SPCS2 and SPCS3. The complex induces a local thinning of the ER membrane which is used to measure the length of the signal peptide (SP) h-region of protein substrates. This ensures the selectivity of the complex towards h-regions shorter than 18-20 amino acids.</text>
</comment>
<comment type="subcellular location">
    <subcellularLocation>
        <location evidence="1">Endoplasmic reticulum membrane</location>
        <topology evidence="1">Single-pass type II membrane protein</topology>
    </subcellularLocation>
</comment>
<comment type="domain">
    <text evidence="2">The C-terminal short (CTS) helix is essential for catalytic activity. It may be accommodated as a transmembrane helix in the thinned membrane environment of the complex, similarly to the signal peptide in the complex substrates.</text>
</comment>
<comment type="PTM">
    <text evidence="2">May undergo processing at the N-terminus.</text>
</comment>
<comment type="similarity">
    <text evidence="4">Belongs to the peptidase S26B family.</text>
</comment>